<keyword id="KW-1185">Reference proteome</keyword>
<keyword id="KW-0687">Ribonucleoprotein</keyword>
<keyword id="KW-0689">Ribosomal protein</keyword>
<keyword id="KW-0694">RNA-binding</keyword>
<keyword id="KW-0699">rRNA-binding</keyword>
<sequence>MALKQFNPTSPGQRGLVLIDRSELHKGRPEKKLVEGLTKSGGRGGNGRIAVRFRGGGAKRLYRLVDFKRRKQGVATVVRLEYDPNRTAFIALIKYQADGELAYILAPQRLKAGDEVVTAEKVDVKPGNASPLRTLPIGTIIHNIELKPAKGGQIARSAGAYAQLVGRDAGYAQIRLNSGELRMVLDTCMATVGAVSNPDHMNQNLGKAGRSRHMGRRPHVRGVAMNPVDHPHGGGEGRTSGGRHPVTPAGKPTKGAKTRVNKATDKFIIRSRHKAKKGR</sequence>
<proteinExistence type="inferred from homology"/>
<protein>
    <recommendedName>
        <fullName evidence="1">Large ribosomal subunit protein uL2</fullName>
    </recommendedName>
    <alternativeName>
        <fullName evidence="3">50S ribosomal protein L2</fullName>
    </alternativeName>
</protein>
<reference key="1">
    <citation type="journal article" date="2010" name="J. Bacteriol.">
        <title>The genetic basis of laboratory adaptation in Caulobacter crescentus.</title>
        <authorList>
            <person name="Marks M.E."/>
            <person name="Castro-Rojas C.M."/>
            <person name="Teiling C."/>
            <person name="Du L."/>
            <person name="Kapatral V."/>
            <person name="Walunas T.L."/>
            <person name="Crosson S."/>
        </authorList>
    </citation>
    <scope>NUCLEOTIDE SEQUENCE [LARGE SCALE GENOMIC DNA]</scope>
    <source>
        <strain>NA1000 / CB15N</strain>
    </source>
</reference>
<dbReference type="EMBL" id="CP001340">
    <property type="protein sequence ID" value="ACL94774.1"/>
    <property type="molecule type" value="Genomic_DNA"/>
</dbReference>
<dbReference type="RefSeq" id="WP_010919130.1">
    <property type="nucleotide sequence ID" value="NC_011916.1"/>
</dbReference>
<dbReference type="RefSeq" id="YP_002516682.1">
    <property type="nucleotide sequence ID" value="NC_011916.1"/>
</dbReference>
<dbReference type="SMR" id="B8H4D7"/>
<dbReference type="GeneID" id="7333041"/>
<dbReference type="KEGG" id="ccs:CCNA_01309"/>
<dbReference type="PATRIC" id="fig|565050.3.peg.1293"/>
<dbReference type="HOGENOM" id="CLU_036235_2_1_5"/>
<dbReference type="OrthoDB" id="9778722at2"/>
<dbReference type="PhylomeDB" id="B8H4D7"/>
<dbReference type="Proteomes" id="UP000001364">
    <property type="component" value="Chromosome"/>
</dbReference>
<dbReference type="GO" id="GO:0015934">
    <property type="term" value="C:large ribosomal subunit"/>
    <property type="evidence" value="ECO:0007669"/>
    <property type="project" value="InterPro"/>
</dbReference>
<dbReference type="GO" id="GO:0019843">
    <property type="term" value="F:rRNA binding"/>
    <property type="evidence" value="ECO:0007669"/>
    <property type="project" value="UniProtKB-UniRule"/>
</dbReference>
<dbReference type="GO" id="GO:0003735">
    <property type="term" value="F:structural constituent of ribosome"/>
    <property type="evidence" value="ECO:0007669"/>
    <property type="project" value="InterPro"/>
</dbReference>
<dbReference type="GO" id="GO:0016740">
    <property type="term" value="F:transferase activity"/>
    <property type="evidence" value="ECO:0007669"/>
    <property type="project" value="InterPro"/>
</dbReference>
<dbReference type="GO" id="GO:0002181">
    <property type="term" value="P:cytoplasmic translation"/>
    <property type="evidence" value="ECO:0007669"/>
    <property type="project" value="TreeGrafter"/>
</dbReference>
<dbReference type="FunFam" id="2.30.30.30:FF:000001">
    <property type="entry name" value="50S ribosomal protein L2"/>
    <property type="match status" value="1"/>
</dbReference>
<dbReference type="FunFam" id="4.10.950.10:FF:000001">
    <property type="entry name" value="50S ribosomal protein L2"/>
    <property type="match status" value="1"/>
</dbReference>
<dbReference type="Gene3D" id="2.30.30.30">
    <property type="match status" value="1"/>
</dbReference>
<dbReference type="Gene3D" id="2.40.50.140">
    <property type="entry name" value="Nucleic acid-binding proteins"/>
    <property type="match status" value="1"/>
</dbReference>
<dbReference type="Gene3D" id="4.10.950.10">
    <property type="entry name" value="Ribosomal protein L2, domain 3"/>
    <property type="match status" value="1"/>
</dbReference>
<dbReference type="HAMAP" id="MF_01320_B">
    <property type="entry name" value="Ribosomal_uL2_B"/>
    <property type="match status" value="1"/>
</dbReference>
<dbReference type="InterPro" id="IPR012340">
    <property type="entry name" value="NA-bd_OB-fold"/>
</dbReference>
<dbReference type="InterPro" id="IPR014722">
    <property type="entry name" value="Rib_uL2_dom2"/>
</dbReference>
<dbReference type="InterPro" id="IPR002171">
    <property type="entry name" value="Ribosomal_uL2"/>
</dbReference>
<dbReference type="InterPro" id="IPR005880">
    <property type="entry name" value="Ribosomal_uL2_bac/org-type"/>
</dbReference>
<dbReference type="InterPro" id="IPR022669">
    <property type="entry name" value="Ribosomal_uL2_C"/>
</dbReference>
<dbReference type="InterPro" id="IPR022671">
    <property type="entry name" value="Ribosomal_uL2_CS"/>
</dbReference>
<dbReference type="InterPro" id="IPR014726">
    <property type="entry name" value="Ribosomal_uL2_dom3"/>
</dbReference>
<dbReference type="InterPro" id="IPR022666">
    <property type="entry name" value="Ribosomal_uL2_RNA-bd_dom"/>
</dbReference>
<dbReference type="InterPro" id="IPR008991">
    <property type="entry name" value="Translation_prot_SH3-like_sf"/>
</dbReference>
<dbReference type="NCBIfam" id="TIGR01171">
    <property type="entry name" value="rplB_bact"/>
    <property type="match status" value="1"/>
</dbReference>
<dbReference type="PANTHER" id="PTHR13691:SF5">
    <property type="entry name" value="LARGE RIBOSOMAL SUBUNIT PROTEIN UL2M"/>
    <property type="match status" value="1"/>
</dbReference>
<dbReference type="PANTHER" id="PTHR13691">
    <property type="entry name" value="RIBOSOMAL PROTEIN L2"/>
    <property type="match status" value="1"/>
</dbReference>
<dbReference type="Pfam" id="PF00181">
    <property type="entry name" value="Ribosomal_L2"/>
    <property type="match status" value="1"/>
</dbReference>
<dbReference type="Pfam" id="PF03947">
    <property type="entry name" value="Ribosomal_L2_C"/>
    <property type="match status" value="1"/>
</dbReference>
<dbReference type="PIRSF" id="PIRSF002158">
    <property type="entry name" value="Ribosomal_L2"/>
    <property type="match status" value="1"/>
</dbReference>
<dbReference type="SMART" id="SM01383">
    <property type="entry name" value="Ribosomal_L2"/>
    <property type="match status" value="1"/>
</dbReference>
<dbReference type="SMART" id="SM01382">
    <property type="entry name" value="Ribosomal_L2_C"/>
    <property type="match status" value="1"/>
</dbReference>
<dbReference type="SUPFAM" id="SSF50249">
    <property type="entry name" value="Nucleic acid-binding proteins"/>
    <property type="match status" value="1"/>
</dbReference>
<dbReference type="SUPFAM" id="SSF50104">
    <property type="entry name" value="Translation proteins SH3-like domain"/>
    <property type="match status" value="1"/>
</dbReference>
<dbReference type="PROSITE" id="PS00467">
    <property type="entry name" value="RIBOSOMAL_L2"/>
    <property type="match status" value="1"/>
</dbReference>
<feature type="chain" id="PRO_1000165730" description="Large ribosomal subunit protein uL2">
    <location>
        <begin position="1"/>
        <end position="279"/>
    </location>
</feature>
<feature type="region of interest" description="Disordered" evidence="2">
    <location>
        <begin position="222"/>
        <end position="279"/>
    </location>
</feature>
<feature type="compositionally biased region" description="Basic residues" evidence="2">
    <location>
        <begin position="269"/>
        <end position="279"/>
    </location>
</feature>
<gene>
    <name evidence="1" type="primary">rplB</name>
    <name type="ordered locus">CCNA_01309</name>
</gene>
<evidence type="ECO:0000255" key="1">
    <source>
        <dbReference type="HAMAP-Rule" id="MF_01320"/>
    </source>
</evidence>
<evidence type="ECO:0000256" key="2">
    <source>
        <dbReference type="SAM" id="MobiDB-lite"/>
    </source>
</evidence>
<evidence type="ECO:0000305" key="3"/>
<name>RL2_CAUVN</name>
<organism>
    <name type="scientific">Caulobacter vibrioides (strain NA1000 / CB15N)</name>
    <name type="common">Caulobacter crescentus</name>
    <dbReference type="NCBI Taxonomy" id="565050"/>
    <lineage>
        <taxon>Bacteria</taxon>
        <taxon>Pseudomonadati</taxon>
        <taxon>Pseudomonadota</taxon>
        <taxon>Alphaproteobacteria</taxon>
        <taxon>Caulobacterales</taxon>
        <taxon>Caulobacteraceae</taxon>
        <taxon>Caulobacter</taxon>
    </lineage>
</organism>
<comment type="function">
    <text evidence="1">One of the primary rRNA binding proteins. Required for association of the 30S and 50S subunits to form the 70S ribosome, for tRNA binding and peptide bond formation. It has been suggested to have peptidyltransferase activity; this is somewhat controversial. Makes several contacts with the 16S rRNA in the 70S ribosome.</text>
</comment>
<comment type="subunit">
    <text evidence="1">Part of the 50S ribosomal subunit. Forms a bridge to the 30S subunit in the 70S ribosome.</text>
</comment>
<comment type="similarity">
    <text evidence="1">Belongs to the universal ribosomal protein uL2 family.</text>
</comment>
<accession>B8H4D7</accession>